<proteinExistence type="evidence at transcript level"/>
<name>GUNB_NEOPA</name>
<keyword id="KW-0326">Glycosidase</keyword>
<keyword id="KW-0378">Hydrolase</keyword>
<keyword id="KW-0677">Repeat</keyword>
<keyword id="KW-0732">Signal</keyword>
<accession>Q12647</accession>
<evidence type="ECO:0000250" key="1"/>
<evidence type="ECO:0000255" key="2"/>
<evidence type="ECO:0000255" key="3">
    <source>
        <dbReference type="PROSITE-ProRule" id="PRU01099"/>
    </source>
</evidence>
<evidence type="ECO:0000305" key="4"/>
<sequence length="473" mass="53070">MKFLNTFSLLSLAIIGSKAMKNISSKELVKDLTIGWSLGNTLDATCFETLDYNKNQIASETCWGNVKTTQELYYKLSDLGFNTFRIPTTWSGHFGNAPDYKINDQWMKRVHEIVDYAINTGGYAILNIHHETWNHAFQKNLESAKKILVAIWKQIAAEFADYDEHLIFEGMNEPRKVGDPAEWNGGDYEGWNFVNEMNDLFVKTIRATGGNNALRHLMIPTYAACINDGAINNFKFPSGDDKVIVSLHSYSPYNFALNNGAGAISNFYDGSEIDWAMNTINSKFISRGIPVIIGEFGAMNRNNEDDRERWAEYYIKKATSIGVPCVIWDNGYFEGEGERFGLINRSTLQVVYPKLVNGLIKGLGNSIKTRTTIRRTTTTTTSQSQPTNNDSCFSVNLGYSCCNGCEVEYTDSDGEWGVENGNWCGIKSSCSNTSRICWSEKLGYPCCQNTSSVVYTDNDGKWGVENGNWCGIY</sequence>
<dbReference type="EC" id="3.2.1.4"/>
<dbReference type="EMBL" id="Z31364">
    <property type="protein sequence ID" value="CAA83238.1"/>
    <property type="molecule type" value="mRNA"/>
</dbReference>
<dbReference type="PIR" id="S40507">
    <property type="entry name" value="S40507"/>
</dbReference>
<dbReference type="SMR" id="Q12647"/>
<dbReference type="CAZy" id="GH5">
    <property type="family name" value="Glycoside Hydrolase Family 5"/>
</dbReference>
<dbReference type="GO" id="GO:0009986">
    <property type="term" value="C:cell surface"/>
    <property type="evidence" value="ECO:0007669"/>
    <property type="project" value="TreeGrafter"/>
</dbReference>
<dbReference type="GO" id="GO:0005576">
    <property type="term" value="C:extracellular region"/>
    <property type="evidence" value="ECO:0007669"/>
    <property type="project" value="TreeGrafter"/>
</dbReference>
<dbReference type="GO" id="GO:0008422">
    <property type="term" value="F:beta-glucosidase activity"/>
    <property type="evidence" value="ECO:0007669"/>
    <property type="project" value="TreeGrafter"/>
</dbReference>
<dbReference type="GO" id="GO:0008810">
    <property type="term" value="F:cellulase activity"/>
    <property type="evidence" value="ECO:0007669"/>
    <property type="project" value="UniProtKB-EC"/>
</dbReference>
<dbReference type="GO" id="GO:0009251">
    <property type="term" value="P:glucan catabolic process"/>
    <property type="evidence" value="ECO:0007669"/>
    <property type="project" value="TreeGrafter"/>
</dbReference>
<dbReference type="Gene3D" id="3.90.1220.10">
    <property type="entry name" value="Cellulose docking domain, dockering"/>
    <property type="match status" value="2"/>
</dbReference>
<dbReference type="Gene3D" id="3.20.20.80">
    <property type="entry name" value="Glycosidases"/>
    <property type="match status" value="1"/>
</dbReference>
<dbReference type="InterPro" id="IPR002883">
    <property type="entry name" value="CBM10/Dockerin_dom"/>
</dbReference>
<dbReference type="InterPro" id="IPR009034">
    <property type="entry name" value="Dockerin_dom_fun_sf"/>
</dbReference>
<dbReference type="InterPro" id="IPR001547">
    <property type="entry name" value="Glyco_hydro_5"/>
</dbReference>
<dbReference type="InterPro" id="IPR018087">
    <property type="entry name" value="Glyco_hydro_5_CS"/>
</dbReference>
<dbReference type="InterPro" id="IPR017853">
    <property type="entry name" value="Glycoside_hydrolase_SF"/>
</dbReference>
<dbReference type="InterPro" id="IPR050386">
    <property type="entry name" value="Glycosyl_hydrolase_5"/>
</dbReference>
<dbReference type="PANTHER" id="PTHR31297:SF17">
    <property type="entry name" value="ENDOGLUCANASE"/>
    <property type="match status" value="1"/>
</dbReference>
<dbReference type="PANTHER" id="PTHR31297">
    <property type="entry name" value="GLUCAN ENDO-1,6-BETA-GLUCOSIDASE B"/>
    <property type="match status" value="1"/>
</dbReference>
<dbReference type="Pfam" id="PF02013">
    <property type="entry name" value="CBM_10"/>
    <property type="match status" value="2"/>
</dbReference>
<dbReference type="Pfam" id="PF00150">
    <property type="entry name" value="Cellulase"/>
    <property type="match status" value="1"/>
</dbReference>
<dbReference type="SUPFAM" id="SSF51445">
    <property type="entry name" value="(Trans)glycosidases"/>
    <property type="match status" value="1"/>
</dbReference>
<dbReference type="SUPFAM" id="SSF64571">
    <property type="entry name" value="Cellulose docking domain, dockering"/>
    <property type="match status" value="2"/>
</dbReference>
<dbReference type="PROSITE" id="PS51763">
    <property type="entry name" value="CBM10"/>
    <property type="match status" value="2"/>
</dbReference>
<dbReference type="PROSITE" id="PS00659">
    <property type="entry name" value="GLYCOSYL_HYDROL_F5"/>
    <property type="match status" value="1"/>
</dbReference>
<comment type="function">
    <text>Rate of hydrolysis of cellulo-oligosaccharides increased with increasing chain length from cellotriose to cellopentaose.</text>
</comment>
<comment type="catalytic activity">
    <reaction>
        <text>Endohydrolysis of (1-&gt;4)-beta-D-glucosidic linkages in cellulose, lichenin and cereal beta-D-glucans.</text>
        <dbReference type="EC" id="3.2.1.4"/>
    </reaction>
</comment>
<comment type="similarity">
    <text evidence="4">Belongs to the glycosyl hydrolase 5 (cellulase A) family.</text>
</comment>
<reference key="1">
    <citation type="journal article" date="1994" name="Biochem. J.">
        <title>Intronless celB from the anaerobic fungus Neocallimastix patriciarum encodes a modular family A endoglucanase.</title>
        <authorList>
            <person name="Zhou L."/>
            <person name="Xue G."/>
            <person name="Orpin C.G."/>
            <person name="Black G.W."/>
            <person name="Gilbert H.J."/>
            <person name="Hazlewood G.P."/>
        </authorList>
    </citation>
    <scope>NUCLEOTIDE SEQUENCE [MRNA]</scope>
</reference>
<protein>
    <recommendedName>
        <fullName>Endoglucanase B</fullName>
        <ecNumber>3.2.1.4</ecNumber>
    </recommendedName>
    <alternativeName>
        <fullName>Cellulase B</fullName>
    </alternativeName>
    <alternativeName>
        <fullName>Endo-1,4-beta-glucanase B</fullName>
    </alternativeName>
</protein>
<gene>
    <name type="primary">CELB</name>
</gene>
<feature type="signal peptide" evidence="2">
    <location>
        <begin position="1"/>
        <end position="17"/>
    </location>
</feature>
<feature type="chain" id="PRO_0000007864" description="Endoglucanase B">
    <location>
        <begin position="18"/>
        <end position="473"/>
    </location>
</feature>
<feature type="domain" description="CBM10 1" evidence="3">
    <location>
        <begin position="391"/>
        <end position="427"/>
    </location>
</feature>
<feature type="domain" description="CBM10 2" evidence="3">
    <location>
        <begin position="436"/>
        <end position="473"/>
    </location>
</feature>
<feature type="region of interest" description="Catalytic">
    <location>
        <begin position="18"/>
        <end position="367"/>
    </location>
</feature>
<feature type="region of interest" description="Linker">
    <location>
        <begin position="365"/>
        <end position="387"/>
    </location>
</feature>
<feature type="active site" description="Proton donor" evidence="1">
    <location>
        <position position="173"/>
    </location>
</feature>
<feature type="active site" description="Nucleophile" evidence="1">
    <location>
        <position position="295"/>
    </location>
</feature>
<organism>
    <name type="scientific">Neocallimastix patriciarum</name>
    <name type="common">Rumen fungus</name>
    <dbReference type="NCBI Taxonomy" id="4758"/>
    <lineage>
        <taxon>Eukaryota</taxon>
        <taxon>Fungi</taxon>
        <taxon>Fungi incertae sedis</taxon>
        <taxon>Chytridiomycota</taxon>
        <taxon>Chytridiomycota incertae sedis</taxon>
        <taxon>Neocallimastigomycetes</taxon>
        <taxon>Neocallimastigales</taxon>
        <taxon>Neocallimastigaceae</taxon>
        <taxon>Neocallimastix</taxon>
    </lineage>
</organism>